<reference key="1">
    <citation type="journal article" date="2006" name="J. Bacteriol.">
        <title>Complete genome sequence of Yersinia pestis strains Antiqua and Nepal516: evidence of gene reduction in an emerging pathogen.</title>
        <authorList>
            <person name="Chain P.S.G."/>
            <person name="Hu P."/>
            <person name="Malfatti S.A."/>
            <person name="Radnedge L."/>
            <person name="Larimer F."/>
            <person name="Vergez L.M."/>
            <person name="Worsham P."/>
            <person name="Chu M.C."/>
            <person name="Andersen G.L."/>
        </authorList>
    </citation>
    <scope>NUCLEOTIDE SEQUENCE [LARGE SCALE GENOMIC DNA]</scope>
    <source>
        <strain>Antiqua</strain>
    </source>
</reference>
<comment type="function">
    <text evidence="1">This is one of the proteins that binds to the 5S RNA in the ribosome where it forms part of the central protuberance.</text>
</comment>
<comment type="subunit">
    <text evidence="1">Part of the 50S ribosomal subunit; part of the 5S rRNA/L5/L18/L25 subcomplex. Contacts the 5S rRNA. Binds to the 5S rRNA independently of L5 and L18.</text>
</comment>
<comment type="similarity">
    <text evidence="1">Belongs to the bacterial ribosomal protein bL25 family.</text>
</comment>
<organism>
    <name type="scientific">Yersinia pestis bv. Antiqua (strain Antiqua)</name>
    <dbReference type="NCBI Taxonomy" id="360102"/>
    <lineage>
        <taxon>Bacteria</taxon>
        <taxon>Pseudomonadati</taxon>
        <taxon>Pseudomonadota</taxon>
        <taxon>Gammaproteobacteria</taxon>
        <taxon>Enterobacterales</taxon>
        <taxon>Yersiniaceae</taxon>
        <taxon>Yersinia</taxon>
    </lineage>
</organism>
<proteinExistence type="inferred from homology"/>
<evidence type="ECO:0000255" key="1">
    <source>
        <dbReference type="HAMAP-Rule" id="MF_01336"/>
    </source>
</evidence>
<evidence type="ECO:0000305" key="2"/>
<dbReference type="EMBL" id="CP000308">
    <property type="protein sequence ID" value="ABG12949.1"/>
    <property type="molecule type" value="Genomic_DNA"/>
</dbReference>
<dbReference type="RefSeq" id="WP_002208834.1">
    <property type="nucleotide sequence ID" value="NZ_CP009906.1"/>
</dbReference>
<dbReference type="SMR" id="Q1C9C3"/>
<dbReference type="GeneID" id="96664865"/>
<dbReference type="KEGG" id="ypa:YPA_0982"/>
<dbReference type="Proteomes" id="UP000001971">
    <property type="component" value="Chromosome"/>
</dbReference>
<dbReference type="GO" id="GO:0022625">
    <property type="term" value="C:cytosolic large ribosomal subunit"/>
    <property type="evidence" value="ECO:0007669"/>
    <property type="project" value="TreeGrafter"/>
</dbReference>
<dbReference type="GO" id="GO:0008097">
    <property type="term" value="F:5S rRNA binding"/>
    <property type="evidence" value="ECO:0007669"/>
    <property type="project" value="InterPro"/>
</dbReference>
<dbReference type="GO" id="GO:0003735">
    <property type="term" value="F:structural constituent of ribosome"/>
    <property type="evidence" value="ECO:0007669"/>
    <property type="project" value="InterPro"/>
</dbReference>
<dbReference type="GO" id="GO:0006412">
    <property type="term" value="P:translation"/>
    <property type="evidence" value="ECO:0007669"/>
    <property type="project" value="UniProtKB-UniRule"/>
</dbReference>
<dbReference type="CDD" id="cd00495">
    <property type="entry name" value="Ribosomal_L25_TL5_CTC"/>
    <property type="match status" value="1"/>
</dbReference>
<dbReference type="FunFam" id="2.40.240.10:FF:000002">
    <property type="entry name" value="50S ribosomal protein L25"/>
    <property type="match status" value="1"/>
</dbReference>
<dbReference type="Gene3D" id="2.40.240.10">
    <property type="entry name" value="Ribosomal Protein L25, Chain P"/>
    <property type="match status" value="1"/>
</dbReference>
<dbReference type="HAMAP" id="MF_01336">
    <property type="entry name" value="Ribosomal_bL25"/>
    <property type="match status" value="1"/>
</dbReference>
<dbReference type="InterPro" id="IPR020056">
    <property type="entry name" value="Rbsml_bL25/Gln-tRNA_synth_N"/>
</dbReference>
<dbReference type="InterPro" id="IPR011035">
    <property type="entry name" value="Ribosomal_bL25/Gln-tRNA_synth"/>
</dbReference>
<dbReference type="InterPro" id="IPR020055">
    <property type="entry name" value="Ribosomal_bL25_short"/>
</dbReference>
<dbReference type="InterPro" id="IPR029751">
    <property type="entry name" value="Ribosomal_L25_dom"/>
</dbReference>
<dbReference type="InterPro" id="IPR020930">
    <property type="entry name" value="Ribosomal_uL5_bac-type"/>
</dbReference>
<dbReference type="NCBIfam" id="NF004612">
    <property type="entry name" value="PRK05943.1"/>
    <property type="match status" value="1"/>
</dbReference>
<dbReference type="PANTHER" id="PTHR33284">
    <property type="entry name" value="RIBOSOMAL PROTEIN L25/GLN-TRNA SYNTHETASE, ANTI-CODON-BINDING DOMAIN-CONTAINING PROTEIN"/>
    <property type="match status" value="1"/>
</dbReference>
<dbReference type="PANTHER" id="PTHR33284:SF1">
    <property type="entry name" value="RIBOSOMAL PROTEIN L25_GLN-TRNA SYNTHETASE, ANTI-CODON-BINDING DOMAIN-CONTAINING PROTEIN"/>
    <property type="match status" value="1"/>
</dbReference>
<dbReference type="Pfam" id="PF01386">
    <property type="entry name" value="Ribosomal_L25p"/>
    <property type="match status" value="1"/>
</dbReference>
<dbReference type="SUPFAM" id="SSF50715">
    <property type="entry name" value="Ribosomal protein L25-like"/>
    <property type="match status" value="1"/>
</dbReference>
<feature type="chain" id="PRO_1000052974" description="Large ribosomal subunit protein bL25">
    <location>
        <begin position="1"/>
        <end position="94"/>
    </location>
</feature>
<accession>Q1C9C3</accession>
<protein>
    <recommendedName>
        <fullName evidence="1">Large ribosomal subunit protein bL25</fullName>
    </recommendedName>
    <alternativeName>
        <fullName evidence="2">50S ribosomal protein L25</fullName>
    </alternativeName>
</protein>
<gene>
    <name evidence="1" type="primary">rplY</name>
    <name type="ordered locus">YPA_0982</name>
</gene>
<name>RL25_YERPA</name>
<sequence>MTTINVEVRNDQGKGASRRLRAANKFPAIVYGGSEAAISIALDHDTTKNLELKPGFYDSVLTLVIDGKETKVKVQAVQRHAFKPKLTHIDFVRV</sequence>
<keyword id="KW-0687">Ribonucleoprotein</keyword>
<keyword id="KW-0689">Ribosomal protein</keyword>
<keyword id="KW-0694">RNA-binding</keyword>
<keyword id="KW-0699">rRNA-binding</keyword>